<sequence length="125" mass="14359">MTKSIGCDIIKVTRFNSFLQNRKKLERFFTQREIENSAMKGKGVLESLAGKFSAKESLIKALSPLINIKIKYSLKDIEIISLPKGNIIFQLHNDIKTLINQMNLKLYLTISHEREYAIAFVIVEN</sequence>
<reference key="1">
    <citation type="submission" date="2004-12" db="EMBL/GenBank/DDBJ databases">
        <title>The genome sequence of Borrelia hermsii and Borrelia turicatae: comparative analysis of two agents of endemic N. America relapsing fever.</title>
        <authorList>
            <person name="Porcella S.F."/>
            <person name="Raffel S.J."/>
            <person name="Schrumpf M.E."/>
            <person name="Montgomery B."/>
            <person name="Smith T."/>
            <person name="Schwan T.G."/>
        </authorList>
    </citation>
    <scope>NUCLEOTIDE SEQUENCE [LARGE SCALE GENOMIC DNA]</scope>
    <source>
        <strain>91E135</strain>
    </source>
</reference>
<accession>A1QYG3</accession>
<dbReference type="EC" id="2.7.8.7" evidence="1"/>
<dbReference type="EMBL" id="CP000049">
    <property type="protein sequence ID" value="AAX17355.1"/>
    <property type="molecule type" value="Genomic_DNA"/>
</dbReference>
<dbReference type="RefSeq" id="WP_011771974.1">
    <property type="nucleotide sequence ID" value="NZ_CP073176.1"/>
</dbReference>
<dbReference type="SMR" id="A1QYG3"/>
<dbReference type="KEGG" id="btu:BT0010"/>
<dbReference type="eggNOG" id="COG0736">
    <property type="taxonomic scope" value="Bacteria"/>
</dbReference>
<dbReference type="HOGENOM" id="CLU_089696_5_0_12"/>
<dbReference type="Proteomes" id="UP000001205">
    <property type="component" value="Chromosome"/>
</dbReference>
<dbReference type="GO" id="GO:0005737">
    <property type="term" value="C:cytoplasm"/>
    <property type="evidence" value="ECO:0007669"/>
    <property type="project" value="UniProtKB-SubCell"/>
</dbReference>
<dbReference type="GO" id="GO:0008897">
    <property type="term" value="F:holo-[acyl-carrier-protein] synthase activity"/>
    <property type="evidence" value="ECO:0007669"/>
    <property type="project" value="UniProtKB-UniRule"/>
</dbReference>
<dbReference type="GO" id="GO:0000287">
    <property type="term" value="F:magnesium ion binding"/>
    <property type="evidence" value="ECO:0007669"/>
    <property type="project" value="UniProtKB-UniRule"/>
</dbReference>
<dbReference type="GO" id="GO:0006633">
    <property type="term" value="P:fatty acid biosynthetic process"/>
    <property type="evidence" value="ECO:0007669"/>
    <property type="project" value="UniProtKB-UniRule"/>
</dbReference>
<dbReference type="Gene3D" id="3.90.470.20">
    <property type="entry name" value="4'-phosphopantetheinyl transferase domain"/>
    <property type="match status" value="1"/>
</dbReference>
<dbReference type="HAMAP" id="MF_00101">
    <property type="entry name" value="AcpS"/>
    <property type="match status" value="1"/>
</dbReference>
<dbReference type="InterPro" id="IPR008278">
    <property type="entry name" value="4-PPantetheinyl_Trfase_dom"/>
</dbReference>
<dbReference type="InterPro" id="IPR037143">
    <property type="entry name" value="4-PPantetheinyl_Trfase_dom_sf"/>
</dbReference>
<dbReference type="InterPro" id="IPR002582">
    <property type="entry name" value="ACPS"/>
</dbReference>
<dbReference type="InterPro" id="IPR004568">
    <property type="entry name" value="Ppantetheine-prot_Trfase_dom"/>
</dbReference>
<dbReference type="NCBIfam" id="TIGR00516">
    <property type="entry name" value="acpS"/>
    <property type="match status" value="1"/>
</dbReference>
<dbReference type="NCBIfam" id="TIGR00556">
    <property type="entry name" value="pantethn_trn"/>
    <property type="match status" value="1"/>
</dbReference>
<dbReference type="Pfam" id="PF01648">
    <property type="entry name" value="ACPS"/>
    <property type="match status" value="1"/>
</dbReference>
<dbReference type="SUPFAM" id="SSF56214">
    <property type="entry name" value="4'-phosphopantetheinyl transferase"/>
    <property type="match status" value="1"/>
</dbReference>
<keyword id="KW-0963">Cytoplasm</keyword>
<keyword id="KW-0275">Fatty acid biosynthesis</keyword>
<keyword id="KW-0276">Fatty acid metabolism</keyword>
<keyword id="KW-0444">Lipid biosynthesis</keyword>
<keyword id="KW-0443">Lipid metabolism</keyword>
<keyword id="KW-0460">Magnesium</keyword>
<keyword id="KW-0479">Metal-binding</keyword>
<keyword id="KW-1185">Reference proteome</keyword>
<keyword id="KW-0808">Transferase</keyword>
<feature type="chain" id="PRO_1000118795" description="Holo-[acyl-carrier-protein] synthase">
    <location>
        <begin position="1"/>
        <end position="125"/>
    </location>
</feature>
<feature type="binding site" evidence="1">
    <location>
        <position position="8"/>
    </location>
    <ligand>
        <name>Mg(2+)</name>
        <dbReference type="ChEBI" id="CHEBI:18420"/>
    </ligand>
</feature>
<feature type="binding site" evidence="1">
    <location>
        <position position="56"/>
    </location>
    <ligand>
        <name>Mg(2+)</name>
        <dbReference type="ChEBI" id="CHEBI:18420"/>
    </ligand>
</feature>
<gene>
    <name evidence="1" type="primary">acpS</name>
    <name type="ordered locus">BT0010</name>
</gene>
<comment type="function">
    <text evidence="1">Transfers the 4'-phosphopantetheine moiety from coenzyme A to a Ser of acyl-carrier-protein.</text>
</comment>
<comment type="catalytic activity">
    <reaction evidence="1">
        <text>apo-[ACP] + CoA = holo-[ACP] + adenosine 3',5'-bisphosphate + H(+)</text>
        <dbReference type="Rhea" id="RHEA:12068"/>
        <dbReference type="Rhea" id="RHEA-COMP:9685"/>
        <dbReference type="Rhea" id="RHEA-COMP:9690"/>
        <dbReference type="ChEBI" id="CHEBI:15378"/>
        <dbReference type="ChEBI" id="CHEBI:29999"/>
        <dbReference type="ChEBI" id="CHEBI:57287"/>
        <dbReference type="ChEBI" id="CHEBI:58343"/>
        <dbReference type="ChEBI" id="CHEBI:64479"/>
        <dbReference type="EC" id="2.7.8.7"/>
    </reaction>
</comment>
<comment type="cofactor">
    <cofactor evidence="1">
        <name>Mg(2+)</name>
        <dbReference type="ChEBI" id="CHEBI:18420"/>
    </cofactor>
</comment>
<comment type="subcellular location">
    <subcellularLocation>
        <location evidence="1">Cytoplasm</location>
    </subcellularLocation>
</comment>
<comment type="similarity">
    <text evidence="1">Belongs to the P-Pant transferase superfamily. AcpS family.</text>
</comment>
<proteinExistence type="inferred from homology"/>
<evidence type="ECO:0000255" key="1">
    <source>
        <dbReference type="HAMAP-Rule" id="MF_00101"/>
    </source>
</evidence>
<organism>
    <name type="scientific">Borrelia turicatae (strain 91E135)</name>
    <dbReference type="NCBI Taxonomy" id="314724"/>
    <lineage>
        <taxon>Bacteria</taxon>
        <taxon>Pseudomonadati</taxon>
        <taxon>Spirochaetota</taxon>
        <taxon>Spirochaetia</taxon>
        <taxon>Spirochaetales</taxon>
        <taxon>Borreliaceae</taxon>
        <taxon>Borrelia</taxon>
    </lineage>
</organism>
<name>ACPS_BORT9</name>
<protein>
    <recommendedName>
        <fullName evidence="1">Holo-[acyl-carrier-protein] synthase</fullName>
        <shortName evidence="1">Holo-ACP synthase</shortName>
        <ecNumber evidence="1">2.7.8.7</ecNumber>
    </recommendedName>
    <alternativeName>
        <fullName evidence="1">4'-phosphopantetheinyl transferase AcpS</fullName>
    </alternativeName>
</protein>